<reference key="1">
    <citation type="journal article" date="1993" name="Plant J.">
        <title>Isolation and characterization of male flower cDNAs from maize.</title>
        <authorList>
            <person name="Wright S.Y."/>
            <person name="Suner M.-M."/>
            <person name="Bell P.J."/>
            <person name="Vaudin M."/>
            <person name="Greenland A.J."/>
        </authorList>
    </citation>
    <scope>NUCLEOTIDE SEQUENCE [MRNA]</scope>
    <source>
        <strain>cv. BE10</strain>
        <tissue>Tassel</tissue>
    </source>
</reference>
<proteinExistence type="evidence at transcript level"/>
<protein>
    <recommendedName>
        <fullName>MFS14 protein</fullName>
    </recommendedName>
</protein>
<gene>
    <name type="primary">MFS14</name>
</gene>
<dbReference type="EMBL" id="X67323">
    <property type="protein sequence ID" value="CAA47737.1"/>
    <property type="molecule type" value="mRNA"/>
</dbReference>
<dbReference type="PIR" id="S25104">
    <property type="entry name" value="S25104"/>
</dbReference>
<dbReference type="MaizeGDB" id="69183"/>
<dbReference type="InParanoid" id="Q01900"/>
<dbReference type="Proteomes" id="UP000007305">
    <property type="component" value="Unplaced"/>
</dbReference>
<name>MFS14_MAIZE</name>
<accession>Q01900</accession>
<sequence length="126" mass="12654">MALEAATAPRALLAACLVLLVLGGGTGPSSVLRAPGRRPAAVPAAAERLLRCRAYLVPARRTPARTAAALSAVCTSAPAAPWASSTACPAGATSPKPTAPLEAGTWHACCNGWQEGRGIRSVSISQ</sequence>
<comment type="tissue specificity">
    <text>Enhanced expression in male flowers. Accumulates in the tapetum.</text>
</comment>
<comment type="developmental stage">
    <text>Associated with microsporogenesis and declines as mature pollen is produced.</text>
</comment>
<organism>
    <name type="scientific">Zea mays</name>
    <name type="common">Maize</name>
    <dbReference type="NCBI Taxonomy" id="4577"/>
    <lineage>
        <taxon>Eukaryota</taxon>
        <taxon>Viridiplantae</taxon>
        <taxon>Streptophyta</taxon>
        <taxon>Embryophyta</taxon>
        <taxon>Tracheophyta</taxon>
        <taxon>Spermatophyta</taxon>
        <taxon>Magnoliopsida</taxon>
        <taxon>Liliopsida</taxon>
        <taxon>Poales</taxon>
        <taxon>Poaceae</taxon>
        <taxon>PACMAD clade</taxon>
        <taxon>Panicoideae</taxon>
        <taxon>Andropogonodae</taxon>
        <taxon>Andropogoneae</taxon>
        <taxon>Tripsacinae</taxon>
        <taxon>Zea</taxon>
    </lineage>
</organism>
<feature type="signal peptide" description="Or 24, or 26" evidence="1">
    <location>
        <begin position="1"/>
        <end position="23"/>
    </location>
</feature>
<feature type="chain" id="PRO_0000021716" description="MFS14 protein">
    <location>
        <begin position="24"/>
        <end position="126"/>
    </location>
</feature>
<keyword id="KW-1185">Reference proteome</keyword>
<keyword id="KW-0732">Signal</keyword>
<evidence type="ECO:0000255" key="1"/>